<name>RNH2_TRIV2</name>
<protein>
    <recommendedName>
        <fullName evidence="1">Ribonuclease HII</fullName>
        <shortName evidence="1">RNase HII</shortName>
        <ecNumber evidence="1">3.1.26.4</ecNumber>
    </recommendedName>
</protein>
<sequence>MMLKKAQTTDNLKLPISLNATGWLESSPDWSNISGLVAGVDEVGRGALFGPVVAASVILPASSFPQLMTAEIKDSKKLSHSRRVQLAQQISTLAIDWRIGYATTAEIDRINILQATLLAMRRSVKKLKLQPILCLVDGNQPVQDLPILQQTIVKGDERSLNIAAASIMAKVWRDDLIQRLSTKYPMYDLKSNKGYGSKKHLLALEKHGASPLHRQSFRPCQISLD</sequence>
<comment type="function">
    <text evidence="1">Endonuclease that specifically degrades the RNA of RNA-DNA hybrids.</text>
</comment>
<comment type="catalytic activity">
    <reaction evidence="1">
        <text>Endonucleolytic cleavage to 5'-phosphomonoester.</text>
        <dbReference type="EC" id="3.1.26.4"/>
    </reaction>
</comment>
<comment type="cofactor">
    <cofactor evidence="1">
        <name>Mn(2+)</name>
        <dbReference type="ChEBI" id="CHEBI:29035"/>
    </cofactor>
    <cofactor evidence="1">
        <name>Mg(2+)</name>
        <dbReference type="ChEBI" id="CHEBI:18420"/>
    </cofactor>
    <text evidence="1">Manganese or magnesium. Binds 1 divalent metal ion per monomer in the absence of substrate. May bind a second metal ion after substrate binding.</text>
</comment>
<comment type="subcellular location">
    <subcellularLocation>
        <location evidence="1">Cytoplasm</location>
    </subcellularLocation>
</comment>
<comment type="similarity">
    <text evidence="1">Belongs to the RNase HII family.</text>
</comment>
<evidence type="ECO:0000255" key="1">
    <source>
        <dbReference type="HAMAP-Rule" id="MF_00052"/>
    </source>
</evidence>
<evidence type="ECO:0000255" key="2">
    <source>
        <dbReference type="PROSITE-ProRule" id="PRU01319"/>
    </source>
</evidence>
<gene>
    <name evidence="1" type="primary">rnhB</name>
    <name type="ordered locus">Ava_1282</name>
</gene>
<accession>Q3MDN0</accession>
<keyword id="KW-0963">Cytoplasm</keyword>
<keyword id="KW-0255">Endonuclease</keyword>
<keyword id="KW-0378">Hydrolase</keyword>
<keyword id="KW-0464">Manganese</keyword>
<keyword id="KW-0479">Metal-binding</keyword>
<keyword id="KW-0540">Nuclease</keyword>
<proteinExistence type="inferred from homology"/>
<reference key="1">
    <citation type="journal article" date="2014" name="Stand. Genomic Sci.">
        <title>Complete genome sequence of Anabaena variabilis ATCC 29413.</title>
        <authorList>
            <person name="Thiel T."/>
            <person name="Pratte B.S."/>
            <person name="Zhong J."/>
            <person name="Goodwin L."/>
            <person name="Copeland A."/>
            <person name="Lucas S."/>
            <person name="Han C."/>
            <person name="Pitluck S."/>
            <person name="Land M.L."/>
            <person name="Kyrpides N.C."/>
            <person name="Woyke T."/>
        </authorList>
    </citation>
    <scope>NUCLEOTIDE SEQUENCE [LARGE SCALE GENOMIC DNA]</scope>
    <source>
        <strain>ATCC 29413 / PCC 7937</strain>
    </source>
</reference>
<organism>
    <name type="scientific">Trichormus variabilis (strain ATCC 29413 / PCC 7937)</name>
    <name type="common">Anabaena variabilis</name>
    <dbReference type="NCBI Taxonomy" id="240292"/>
    <lineage>
        <taxon>Bacteria</taxon>
        <taxon>Bacillati</taxon>
        <taxon>Cyanobacteriota</taxon>
        <taxon>Cyanophyceae</taxon>
        <taxon>Nostocales</taxon>
        <taxon>Nostocaceae</taxon>
        <taxon>Trichormus</taxon>
    </lineage>
</organism>
<feature type="chain" id="PRO_0000235692" description="Ribonuclease HII">
    <location>
        <begin position="1"/>
        <end position="225"/>
    </location>
</feature>
<feature type="domain" description="RNase H type-2" evidence="2">
    <location>
        <begin position="35"/>
        <end position="225"/>
    </location>
</feature>
<feature type="binding site" evidence="1">
    <location>
        <position position="41"/>
    </location>
    <ligand>
        <name>a divalent metal cation</name>
        <dbReference type="ChEBI" id="CHEBI:60240"/>
    </ligand>
</feature>
<feature type="binding site" evidence="1">
    <location>
        <position position="42"/>
    </location>
    <ligand>
        <name>a divalent metal cation</name>
        <dbReference type="ChEBI" id="CHEBI:60240"/>
    </ligand>
</feature>
<feature type="binding site" evidence="1">
    <location>
        <position position="137"/>
    </location>
    <ligand>
        <name>a divalent metal cation</name>
        <dbReference type="ChEBI" id="CHEBI:60240"/>
    </ligand>
</feature>
<dbReference type="EC" id="3.1.26.4" evidence="1"/>
<dbReference type="EMBL" id="CP000117">
    <property type="protein sequence ID" value="ABA20906.1"/>
    <property type="molecule type" value="Genomic_DNA"/>
</dbReference>
<dbReference type="SMR" id="Q3MDN0"/>
<dbReference type="STRING" id="240292.Ava_1282"/>
<dbReference type="KEGG" id="ava:Ava_1282"/>
<dbReference type="eggNOG" id="COG0164">
    <property type="taxonomic scope" value="Bacteria"/>
</dbReference>
<dbReference type="HOGENOM" id="CLU_036532_3_2_3"/>
<dbReference type="Proteomes" id="UP000002533">
    <property type="component" value="Chromosome"/>
</dbReference>
<dbReference type="GO" id="GO:0005737">
    <property type="term" value="C:cytoplasm"/>
    <property type="evidence" value="ECO:0007669"/>
    <property type="project" value="UniProtKB-SubCell"/>
</dbReference>
<dbReference type="GO" id="GO:0032299">
    <property type="term" value="C:ribonuclease H2 complex"/>
    <property type="evidence" value="ECO:0007669"/>
    <property type="project" value="TreeGrafter"/>
</dbReference>
<dbReference type="GO" id="GO:0030145">
    <property type="term" value="F:manganese ion binding"/>
    <property type="evidence" value="ECO:0007669"/>
    <property type="project" value="UniProtKB-UniRule"/>
</dbReference>
<dbReference type="GO" id="GO:0003723">
    <property type="term" value="F:RNA binding"/>
    <property type="evidence" value="ECO:0007669"/>
    <property type="project" value="InterPro"/>
</dbReference>
<dbReference type="GO" id="GO:0004523">
    <property type="term" value="F:RNA-DNA hybrid ribonuclease activity"/>
    <property type="evidence" value="ECO:0007669"/>
    <property type="project" value="UniProtKB-UniRule"/>
</dbReference>
<dbReference type="GO" id="GO:0043137">
    <property type="term" value="P:DNA replication, removal of RNA primer"/>
    <property type="evidence" value="ECO:0007669"/>
    <property type="project" value="TreeGrafter"/>
</dbReference>
<dbReference type="GO" id="GO:0006298">
    <property type="term" value="P:mismatch repair"/>
    <property type="evidence" value="ECO:0007669"/>
    <property type="project" value="TreeGrafter"/>
</dbReference>
<dbReference type="CDD" id="cd07182">
    <property type="entry name" value="RNase_HII_bacteria_HII_like"/>
    <property type="match status" value="1"/>
</dbReference>
<dbReference type="Gene3D" id="3.30.420.10">
    <property type="entry name" value="Ribonuclease H-like superfamily/Ribonuclease H"/>
    <property type="match status" value="1"/>
</dbReference>
<dbReference type="HAMAP" id="MF_00052_B">
    <property type="entry name" value="RNase_HII_B"/>
    <property type="match status" value="1"/>
</dbReference>
<dbReference type="InterPro" id="IPR022898">
    <property type="entry name" value="RNase_HII"/>
</dbReference>
<dbReference type="InterPro" id="IPR001352">
    <property type="entry name" value="RNase_HII/HIII"/>
</dbReference>
<dbReference type="InterPro" id="IPR024567">
    <property type="entry name" value="RNase_HII/HIII_dom"/>
</dbReference>
<dbReference type="InterPro" id="IPR012337">
    <property type="entry name" value="RNaseH-like_sf"/>
</dbReference>
<dbReference type="InterPro" id="IPR036397">
    <property type="entry name" value="RNaseH_sf"/>
</dbReference>
<dbReference type="NCBIfam" id="NF000595">
    <property type="entry name" value="PRK00015.1-3"/>
    <property type="match status" value="1"/>
</dbReference>
<dbReference type="NCBIfam" id="NF010537">
    <property type="entry name" value="PRK13925.1"/>
    <property type="match status" value="1"/>
</dbReference>
<dbReference type="PANTHER" id="PTHR10954">
    <property type="entry name" value="RIBONUCLEASE H2 SUBUNIT A"/>
    <property type="match status" value="1"/>
</dbReference>
<dbReference type="PANTHER" id="PTHR10954:SF18">
    <property type="entry name" value="RIBONUCLEASE HII"/>
    <property type="match status" value="1"/>
</dbReference>
<dbReference type="Pfam" id="PF01351">
    <property type="entry name" value="RNase_HII"/>
    <property type="match status" value="1"/>
</dbReference>
<dbReference type="SUPFAM" id="SSF53098">
    <property type="entry name" value="Ribonuclease H-like"/>
    <property type="match status" value="1"/>
</dbReference>
<dbReference type="PROSITE" id="PS51975">
    <property type="entry name" value="RNASE_H_2"/>
    <property type="match status" value="1"/>
</dbReference>